<feature type="chain" id="PRO_0000083467" description="Nitrogen regulatory protein areA">
    <location>
        <begin position="1"/>
        <end position="725"/>
    </location>
</feature>
<feature type="zinc finger region" description="GATA-type" evidence="1">
    <location>
        <begin position="525"/>
        <end position="549"/>
    </location>
</feature>
<feature type="region of interest" description="Disordered" evidence="2">
    <location>
        <begin position="1"/>
        <end position="90"/>
    </location>
</feature>
<feature type="region of interest" description="Disordered" evidence="2">
    <location>
        <begin position="429"/>
        <end position="464"/>
    </location>
</feature>
<feature type="region of interest" description="Disordered" evidence="2">
    <location>
        <begin position="479"/>
        <end position="524"/>
    </location>
</feature>
<feature type="region of interest" description="Disordered" evidence="2">
    <location>
        <begin position="574"/>
        <end position="714"/>
    </location>
</feature>
<feature type="compositionally biased region" description="Basic and acidic residues" evidence="2">
    <location>
        <begin position="39"/>
        <end position="48"/>
    </location>
</feature>
<feature type="compositionally biased region" description="Polar residues" evidence="2">
    <location>
        <begin position="442"/>
        <end position="452"/>
    </location>
</feature>
<feature type="compositionally biased region" description="Polar residues" evidence="2">
    <location>
        <begin position="479"/>
        <end position="500"/>
    </location>
</feature>
<feature type="compositionally biased region" description="Polar residues" evidence="2">
    <location>
        <begin position="575"/>
        <end position="584"/>
    </location>
</feature>
<feature type="compositionally biased region" description="Polar residues" evidence="2">
    <location>
        <begin position="597"/>
        <end position="624"/>
    </location>
</feature>
<feature type="compositionally biased region" description="Low complexity" evidence="2">
    <location>
        <begin position="631"/>
        <end position="656"/>
    </location>
</feature>
<feature type="compositionally biased region" description="Low complexity" evidence="2">
    <location>
        <begin position="678"/>
        <end position="704"/>
    </location>
</feature>
<reference key="1">
    <citation type="journal article" date="1995" name="Curr. Genet.">
        <title>Molecular cloning and analysis of nre, the major nitrogen regulatory gene of Penicillium chrysogenum.</title>
        <authorList>
            <person name="Haas H."/>
            <person name="Bauer B."/>
            <person name="Redl B."/>
            <person name="Stoeffler G."/>
            <person name="Marzluf G.A."/>
        </authorList>
    </citation>
    <scope>NUCLEOTIDE SEQUENCE [GENOMIC DNA]</scope>
</reference>
<evidence type="ECO:0000255" key="1">
    <source>
        <dbReference type="PROSITE-ProRule" id="PRU00094"/>
    </source>
</evidence>
<evidence type="ECO:0000256" key="2">
    <source>
        <dbReference type="SAM" id="MobiDB-lite"/>
    </source>
</evidence>
<comment type="function">
    <text>Major nitrogen regulatory protein.</text>
</comment>
<comment type="subcellular location">
    <subcellularLocation>
        <location>Nucleus</location>
    </subcellularLocation>
</comment>
<accession>Q01582</accession>
<gene>
    <name type="primary">AREA</name>
    <name type="synonym">NRE</name>
</gene>
<organism>
    <name type="scientific">Penicillium chrysogenum</name>
    <name type="common">Penicillium notatum</name>
    <dbReference type="NCBI Taxonomy" id="5076"/>
    <lineage>
        <taxon>Eukaryota</taxon>
        <taxon>Fungi</taxon>
        <taxon>Dikarya</taxon>
        <taxon>Ascomycota</taxon>
        <taxon>Pezizomycotina</taxon>
        <taxon>Eurotiomycetes</taxon>
        <taxon>Eurotiomycetidae</taxon>
        <taxon>Eurotiales</taxon>
        <taxon>Aspergillaceae</taxon>
        <taxon>Penicillium</taxon>
        <taxon>Penicillium chrysogenum species complex</taxon>
    </lineage>
</organism>
<sequence length="725" mass="76848">MRLSDQVSPAGPDPSHDMNLDATSDPMNLDDFIVPFDSPAEHSAHPSVDRNFAATPTGSIPIKSRKDHAMTDSSTAASFPHPPQDQRTNSEFGYVPRRVRKTSVDERQFFAGLSVPTRKRPAEASPQVPPVSNAMMAHSSELSAALPDYSLDHHLLLLLFLAMAQWAPPTSSPSHAFQHSLRLDTYGINEDHGLNSAGPYQQNFHFSPSDSPMTAGNPFSSLYAQTPLASSLNSTEFFSPPPSGYQSTVSTPQPIYEGEQSIFFSDAPSAESHTQRRIPNYIQQRQSNLSASLQPRYMYNMSNGESHPGSAVTGPPTTNMSGFSVPQHVNPSQVLGHGEFSTTAPASSMFTFGGDSDNEDDDGNFGERGGITMPNDFASLDESVDMSAGLHWDGGFPGSVQSLPGFSAQTRKHVTIGSTDMIDGPLEWNQGGTLGRAHGSAASVSEVRNQNQDPRRYGKVPRTASTPNAAALLRQSLNGSASGLPTNHPSPSTLPESGLSSRCLPARQPGGLKNGSTNAGPEPACTNCFTQTTPLWRRNPEGQPLCNACGLFLKLHGVVRPLSLKTDVIKKRNRSSANTLTVGTSRSSKKSSRKNSIQHAPSTSISSRMNTSESPPSINGSSTLGKPGVVPIAAAPPKSGPPAGVAQARAGVQVAPRRQRRLEKAPAGSEPDADDSPKSAAPPSRSKVVPLAPAMAPPAAANPANHSIAGGQGASQEWEWLTMSL</sequence>
<proteinExistence type="predicted"/>
<keyword id="KW-0010">Activator</keyword>
<keyword id="KW-0238">DNA-binding</keyword>
<keyword id="KW-0479">Metal-binding</keyword>
<keyword id="KW-0534">Nitrate assimilation</keyword>
<keyword id="KW-0539">Nucleus</keyword>
<keyword id="KW-0804">Transcription</keyword>
<keyword id="KW-0805">Transcription regulation</keyword>
<keyword id="KW-0862">Zinc</keyword>
<keyword id="KW-0863">Zinc-finger</keyword>
<name>AREA_PENCH</name>
<protein>
    <recommendedName>
        <fullName>Nitrogen regulatory protein areA</fullName>
        <shortName>Nitrogen regulator nre</shortName>
    </recommendedName>
</protein>
<dbReference type="EMBL" id="U02612">
    <property type="protein sequence ID" value="AAA83400.1"/>
    <property type="molecule type" value="Genomic_DNA"/>
</dbReference>
<dbReference type="GO" id="GO:0005634">
    <property type="term" value="C:nucleus"/>
    <property type="evidence" value="ECO:0007669"/>
    <property type="project" value="UniProtKB-SubCell"/>
</dbReference>
<dbReference type="GO" id="GO:0000981">
    <property type="term" value="F:DNA-binding transcription factor activity, RNA polymerase II-specific"/>
    <property type="evidence" value="ECO:0007669"/>
    <property type="project" value="TreeGrafter"/>
</dbReference>
<dbReference type="GO" id="GO:0000978">
    <property type="term" value="F:RNA polymerase II cis-regulatory region sequence-specific DNA binding"/>
    <property type="evidence" value="ECO:0007669"/>
    <property type="project" value="TreeGrafter"/>
</dbReference>
<dbReference type="GO" id="GO:0008270">
    <property type="term" value="F:zinc ion binding"/>
    <property type="evidence" value="ECO:0007669"/>
    <property type="project" value="UniProtKB-KW"/>
</dbReference>
<dbReference type="GO" id="GO:0000122">
    <property type="term" value="P:negative regulation of transcription by RNA polymerase II"/>
    <property type="evidence" value="ECO:0007669"/>
    <property type="project" value="TreeGrafter"/>
</dbReference>
<dbReference type="GO" id="GO:0042128">
    <property type="term" value="P:nitrate assimilation"/>
    <property type="evidence" value="ECO:0007669"/>
    <property type="project" value="UniProtKB-KW"/>
</dbReference>
<dbReference type="GO" id="GO:0045944">
    <property type="term" value="P:positive regulation of transcription by RNA polymerase II"/>
    <property type="evidence" value="ECO:0007669"/>
    <property type="project" value="TreeGrafter"/>
</dbReference>
<dbReference type="CDD" id="cd00202">
    <property type="entry name" value="ZnF_GATA"/>
    <property type="match status" value="1"/>
</dbReference>
<dbReference type="FunFam" id="3.30.50.10:FF:000007">
    <property type="entry name" value="Nitrogen regulatory AreA, N-terminal"/>
    <property type="match status" value="1"/>
</dbReference>
<dbReference type="Gene3D" id="3.30.50.10">
    <property type="entry name" value="Erythroid Transcription Factor GATA-1, subunit A"/>
    <property type="match status" value="1"/>
</dbReference>
<dbReference type="InterPro" id="IPR039355">
    <property type="entry name" value="Transcription_factor_GATA"/>
</dbReference>
<dbReference type="InterPro" id="IPR000679">
    <property type="entry name" value="Znf_GATA"/>
</dbReference>
<dbReference type="InterPro" id="IPR013088">
    <property type="entry name" value="Znf_NHR/GATA"/>
</dbReference>
<dbReference type="PANTHER" id="PTHR10071:SF281">
    <property type="entry name" value="BOX A-BINDING FACTOR-RELATED"/>
    <property type="match status" value="1"/>
</dbReference>
<dbReference type="PANTHER" id="PTHR10071">
    <property type="entry name" value="TRANSCRIPTION FACTOR GATA FAMILY MEMBER"/>
    <property type="match status" value="1"/>
</dbReference>
<dbReference type="Pfam" id="PF00320">
    <property type="entry name" value="GATA"/>
    <property type="match status" value="1"/>
</dbReference>
<dbReference type="PRINTS" id="PR00619">
    <property type="entry name" value="GATAZNFINGER"/>
</dbReference>
<dbReference type="SMART" id="SM00401">
    <property type="entry name" value="ZnF_GATA"/>
    <property type="match status" value="1"/>
</dbReference>
<dbReference type="SUPFAM" id="SSF57716">
    <property type="entry name" value="Glucocorticoid receptor-like (DNA-binding domain)"/>
    <property type="match status" value="1"/>
</dbReference>
<dbReference type="PROSITE" id="PS00344">
    <property type="entry name" value="GATA_ZN_FINGER_1"/>
    <property type="match status" value="1"/>
</dbReference>
<dbReference type="PROSITE" id="PS50114">
    <property type="entry name" value="GATA_ZN_FINGER_2"/>
    <property type="match status" value="1"/>
</dbReference>